<name>RF1_AQUAE</name>
<sequence>MLKEAYISRLDKLQEKYRKLQEELSKPEVIQDVEKYKKLSKELKELQEINELYERYKKAQKELKEAKELLKSSDKDLRELAEEEVNRLTEEMKKLEEELKVHLVPKDPNDTKNVILEIRAGAGGEEAALFAADLFRMYQKYAEEKGWKVSILSSNKTGLGGYKEVIALIEGEGAYSRLKYESGVHRVQRVPVTESSGRIHTSTATVAVLPEVDETDIKIKPEELKIETFRASGAGGQYVNTTETAVRITHIPTGIVVQCQDERSQFQNKQKALKILYAKLKDYYERKKQEEIAKERKEQVGTGERSEKIRTYNFPQNRVTDHRINLTLYKLQDVLEGKLDEIIDALRAKEIEKKLELVEKEG</sequence>
<evidence type="ECO:0000250" key="1"/>
<evidence type="ECO:0000305" key="2"/>
<dbReference type="EMBL" id="AE000657">
    <property type="protein sequence ID" value="AAC06991.1"/>
    <property type="molecule type" value="Genomic_DNA"/>
</dbReference>
<dbReference type="PIR" id="E70375">
    <property type="entry name" value="E70375"/>
</dbReference>
<dbReference type="RefSeq" id="NP_213594.1">
    <property type="nucleotide sequence ID" value="NC_000918.1"/>
</dbReference>
<dbReference type="RefSeq" id="WP_010880532.1">
    <property type="nucleotide sequence ID" value="NC_000918.1"/>
</dbReference>
<dbReference type="SMR" id="O67032"/>
<dbReference type="FunCoup" id="O67032">
    <property type="interactions" value="386"/>
</dbReference>
<dbReference type="STRING" id="224324.aq_876"/>
<dbReference type="EnsemblBacteria" id="AAC06991">
    <property type="protein sequence ID" value="AAC06991"/>
    <property type="gene ID" value="aq_876"/>
</dbReference>
<dbReference type="KEGG" id="aae:aq_876"/>
<dbReference type="PATRIC" id="fig|224324.8.peg.682"/>
<dbReference type="eggNOG" id="COG0216">
    <property type="taxonomic scope" value="Bacteria"/>
</dbReference>
<dbReference type="HOGENOM" id="CLU_036856_0_1_0"/>
<dbReference type="InParanoid" id="O67032"/>
<dbReference type="OrthoDB" id="9806673at2"/>
<dbReference type="Proteomes" id="UP000000798">
    <property type="component" value="Chromosome"/>
</dbReference>
<dbReference type="GO" id="GO:0005737">
    <property type="term" value="C:cytoplasm"/>
    <property type="evidence" value="ECO:0007669"/>
    <property type="project" value="UniProtKB-SubCell"/>
</dbReference>
<dbReference type="GO" id="GO:0016149">
    <property type="term" value="F:translation release factor activity, codon specific"/>
    <property type="evidence" value="ECO:0007669"/>
    <property type="project" value="UniProtKB-UniRule"/>
</dbReference>
<dbReference type="FunFam" id="3.30.160.20:FF:000004">
    <property type="entry name" value="Peptide chain release factor 1"/>
    <property type="match status" value="1"/>
</dbReference>
<dbReference type="FunFam" id="3.30.70.1660:FF:000002">
    <property type="entry name" value="Peptide chain release factor 1"/>
    <property type="match status" value="1"/>
</dbReference>
<dbReference type="FunFam" id="3.30.70.1660:FF:000004">
    <property type="entry name" value="Peptide chain release factor 1"/>
    <property type="match status" value="1"/>
</dbReference>
<dbReference type="Gene3D" id="3.30.160.20">
    <property type="match status" value="1"/>
</dbReference>
<dbReference type="Gene3D" id="3.30.70.1660">
    <property type="match status" value="1"/>
</dbReference>
<dbReference type="Gene3D" id="6.10.140.1950">
    <property type="match status" value="1"/>
</dbReference>
<dbReference type="HAMAP" id="MF_00093">
    <property type="entry name" value="Rel_fac_1"/>
    <property type="match status" value="1"/>
</dbReference>
<dbReference type="InterPro" id="IPR005139">
    <property type="entry name" value="PCRF"/>
</dbReference>
<dbReference type="InterPro" id="IPR000352">
    <property type="entry name" value="Pep_chain_release_fac_I"/>
</dbReference>
<dbReference type="InterPro" id="IPR045853">
    <property type="entry name" value="Pep_chain_release_fac_I_sf"/>
</dbReference>
<dbReference type="InterPro" id="IPR050057">
    <property type="entry name" value="Prokaryotic/Mito_RF"/>
</dbReference>
<dbReference type="InterPro" id="IPR004373">
    <property type="entry name" value="RF-1"/>
</dbReference>
<dbReference type="NCBIfam" id="TIGR00019">
    <property type="entry name" value="prfA"/>
    <property type="match status" value="1"/>
</dbReference>
<dbReference type="NCBIfam" id="NF001859">
    <property type="entry name" value="PRK00591.1"/>
    <property type="match status" value="1"/>
</dbReference>
<dbReference type="PANTHER" id="PTHR43804">
    <property type="entry name" value="LD18447P"/>
    <property type="match status" value="1"/>
</dbReference>
<dbReference type="PANTHER" id="PTHR43804:SF7">
    <property type="entry name" value="LD18447P"/>
    <property type="match status" value="1"/>
</dbReference>
<dbReference type="Pfam" id="PF03462">
    <property type="entry name" value="PCRF"/>
    <property type="match status" value="1"/>
</dbReference>
<dbReference type="Pfam" id="PF00472">
    <property type="entry name" value="RF-1"/>
    <property type="match status" value="1"/>
</dbReference>
<dbReference type="SMART" id="SM00937">
    <property type="entry name" value="PCRF"/>
    <property type="match status" value="1"/>
</dbReference>
<dbReference type="SUPFAM" id="SSF75620">
    <property type="entry name" value="Release factor"/>
    <property type="match status" value="1"/>
</dbReference>
<dbReference type="PROSITE" id="PS00745">
    <property type="entry name" value="RF_PROK_I"/>
    <property type="match status" value="1"/>
</dbReference>
<protein>
    <recommendedName>
        <fullName>Peptide chain release factor 1</fullName>
        <shortName>RF-1</shortName>
    </recommendedName>
</protein>
<gene>
    <name type="primary">prfA</name>
    <name type="ordered locus">aq_876</name>
</gene>
<reference key="1">
    <citation type="journal article" date="1998" name="Nature">
        <title>The complete genome of the hyperthermophilic bacterium Aquifex aeolicus.</title>
        <authorList>
            <person name="Deckert G."/>
            <person name="Warren P.V."/>
            <person name="Gaasterland T."/>
            <person name="Young W.G."/>
            <person name="Lenox A.L."/>
            <person name="Graham D.E."/>
            <person name="Overbeek R."/>
            <person name="Snead M.A."/>
            <person name="Keller M."/>
            <person name="Aujay M."/>
            <person name="Huber R."/>
            <person name="Feldman R.A."/>
            <person name="Short J.M."/>
            <person name="Olsen G.J."/>
            <person name="Swanson R.V."/>
        </authorList>
    </citation>
    <scope>NUCLEOTIDE SEQUENCE [LARGE SCALE GENOMIC DNA]</scope>
    <source>
        <strain>VF5</strain>
    </source>
</reference>
<accession>O67032</accession>
<keyword id="KW-0963">Cytoplasm</keyword>
<keyword id="KW-0488">Methylation</keyword>
<keyword id="KW-0648">Protein biosynthesis</keyword>
<keyword id="KW-1185">Reference proteome</keyword>
<proteinExistence type="inferred from homology"/>
<comment type="function">
    <text evidence="1">Peptide chain release factor 1 directs the termination of translation in response to the peptide chain termination codons UAG and UAA.</text>
</comment>
<comment type="subcellular location">
    <subcellularLocation>
        <location evidence="1">Cytoplasm</location>
    </subcellularLocation>
</comment>
<comment type="PTM">
    <text evidence="1">Methylated by PrmC. Methylation increases the termination efficiency of RF1 (By similarity).</text>
</comment>
<comment type="similarity">
    <text evidence="2">Belongs to the prokaryotic/mitochondrial release factor family.</text>
</comment>
<feature type="chain" id="PRO_0000177624" description="Peptide chain release factor 1">
    <location>
        <begin position="1"/>
        <end position="362"/>
    </location>
</feature>
<feature type="modified residue" description="N5-methylglutamine" evidence="1">
    <location>
        <position position="237"/>
    </location>
</feature>
<organism>
    <name type="scientific">Aquifex aeolicus (strain VF5)</name>
    <dbReference type="NCBI Taxonomy" id="224324"/>
    <lineage>
        <taxon>Bacteria</taxon>
        <taxon>Pseudomonadati</taxon>
        <taxon>Aquificota</taxon>
        <taxon>Aquificia</taxon>
        <taxon>Aquificales</taxon>
        <taxon>Aquificaceae</taxon>
        <taxon>Aquifex</taxon>
    </lineage>
</organism>